<gene>
    <name evidence="1" type="primary">dut</name>
    <name type="ordered locus">CBUD_1788</name>
</gene>
<feature type="chain" id="PRO_1000076056" description="Deoxyuridine 5'-triphosphate nucleotidohydrolase">
    <location>
        <begin position="1"/>
        <end position="152"/>
    </location>
</feature>
<feature type="binding site" evidence="1">
    <location>
        <begin position="71"/>
        <end position="73"/>
    </location>
    <ligand>
        <name>substrate</name>
    </ligand>
</feature>
<feature type="binding site" evidence="1">
    <location>
        <position position="84"/>
    </location>
    <ligand>
        <name>substrate</name>
    </ligand>
</feature>
<feature type="binding site" evidence="1">
    <location>
        <begin position="88"/>
        <end position="90"/>
    </location>
    <ligand>
        <name>substrate</name>
    </ligand>
</feature>
<feature type="binding site" evidence="1">
    <location>
        <position position="98"/>
    </location>
    <ligand>
        <name>substrate</name>
    </ligand>
</feature>
<reference key="1">
    <citation type="journal article" date="2009" name="Infect. Immun.">
        <title>Comparative genomics reveal extensive transposon-mediated genomic plasticity and diversity among potential effector proteins within the genus Coxiella.</title>
        <authorList>
            <person name="Beare P.A."/>
            <person name="Unsworth N."/>
            <person name="Andoh M."/>
            <person name="Voth D.E."/>
            <person name="Omsland A."/>
            <person name="Gilk S.D."/>
            <person name="Williams K.P."/>
            <person name="Sobral B.W."/>
            <person name="Kupko J.J. III"/>
            <person name="Porcella S.F."/>
            <person name="Samuel J.E."/>
            <person name="Heinzen R.A."/>
        </authorList>
    </citation>
    <scope>NUCLEOTIDE SEQUENCE [LARGE SCALE GENOMIC DNA]</scope>
    <source>
        <strain>Dugway 5J108-111</strain>
    </source>
</reference>
<proteinExistence type="inferred from homology"/>
<evidence type="ECO:0000255" key="1">
    <source>
        <dbReference type="HAMAP-Rule" id="MF_00116"/>
    </source>
</evidence>
<evidence type="ECO:0000305" key="2"/>
<sequence>MTHSVQLKILDKRLGSEFPLPAYATKGSAGLDLRACLDEPLKIEPDETCLISTGLAIYLGHSNVAATILPRSGLGHKHGIVLGNLVGLIDSDYQGPLMVSCWNRGKEPYTINPGDRIAQLVVLPILKAQFAVVEEFELTERGAGGFGSSGQN</sequence>
<comment type="function">
    <text evidence="1">This enzyme is involved in nucleotide metabolism: it produces dUMP, the immediate precursor of thymidine nucleotides and it decreases the intracellular concentration of dUTP so that uracil cannot be incorporated into DNA.</text>
</comment>
<comment type="catalytic activity">
    <reaction evidence="1">
        <text>dUTP + H2O = dUMP + diphosphate + H(+)</text>
        <dbReference type="Rhea" id="RHEA:10248"/>
        <dbReference type="ChEBI" id="CHEBI:15377"/>
        <dbReference type="ChEBI" id="CHEBI:15378"/>
        <dbReference type="ChEBI" id="CHEBI:33019"/>
        <dbReference type="ChEBI" id="CHEBI:61555"/>
        <dbReference type="ChEBI" id="CHEBI:246422"/>
        <dbReference type="EC" id="3.6.1.23"/>
    </reaction>
</comment>
<comment type="cofactor">
    <cofactor evidence="1">
        <name>Mg(2+)</name>
        <dbReference type="ChEBI" id="CHEBI:18420"/>
    </cofactor>
</comment>
<comment type="pathway">
    <text evidence="1">Pyrimidine metabolism; dUMP biosynthesis; dUMP from dCTP (dUTP route): step 2/2.</text>
</comment>
<comment type="similarity">
    <text evidence="1">Belongs to the dUTPase family.</text>
</comment>
<comment type="sequence caution" evidence="2">
    <conflict type="erroneous initiation">
        <sequence resource="EMBL-CDS" id="ABS77608"/>
    </conflict>
</comment>
<accession>A9KGS5</accession>
<organism>
    <name type="scientific">Coxiella burnetii (strain Dugway 5J108-111)</name>
    <dbReference type="NCBI Taxonomy" id="434922"/>
    <lineage>
        <taxon>Bacteria</taxon>
        <taxon>Pseudomonadati</taxon>
        <taxon>Pseudomonadota</taxon>
        <taxon>Gammaproteobacteria</taxon>
        <taxon>Legionellales</taxon>
        <taxon>Coxiellaceae</taxon>
        <taxon>Coxiella</taxon>
    </lineage>
</organism>
<name>DUT_COXBN</name>
<keyword id="KW-0378">Hydrolase</keyword>
<keyword id="KW-0460">Magnesium</keyword>
<keyword id="KW-0479">Metal-binding</keyword>
<keyword id="KW-0546">Nucleotide metabolism</keyword>
<dbReference type="EC" id="3.6.1.23" evidence="1"/>
<dbReference type="EMBL" id="CP000733">
    <property type="protein sequence ID" value="ABS77608.2"/>
    <property type="status" value="ALT_INIT"/>
    <property type="molecule type" value="Genomic_DNA"/>
</dbReference>
<dbReference type="SMR" id="A9KGS5"/>
<dbReference type="KEGG" id="cbd:CBUD_1788"/>
<dbReference type="HOGENOM" id="CLU_068508_1_1_6"/>
<dbReference type="UniPathway" id="UPA00610">
    <property type="reaction ID" value="UER00666"/>
</dbReference>
<dbReference type="Proteomes" id="UP000008555">
    <property type="component" value="Chromosome"/>
</dbReference>
<dbReference type="GO" id="GO:0004170">
    <property type="term" value="F:dUTP diphosphatase activity"/>
    <property type="evidence" value="ECO:0007669"/>
    <property type="project" value="UniProtKB-UniRule"/>
</dbReference>
<dbReference type="GO" id="GO:0000287">
    <property type="term" value="F:magnesium ion binding"/>
    <property type="evidence" value="ECO:0007669"/>
    <property type="project" value="UniProtKB-UniRule"/>
</dbReference>
<dbReference type="GO" id="GO:0006226">
    <property type="term" value="P:dUMP biosynthetic process"/>
    <property type="evidence" value="ECO:0007669"/>
    <property type="project" value="UniProtKB-UniRule"/>
</dbReference>
<dbReference type="GO" id="GO:0046081">
    <property type="term" value="P:dUTP catabolic process"/>
    <property type="evidence" value="ECO:0007669"/>
    <property type="project" value="InterPro"/>
</dbReference>
<dbReference type="CDD" id="cd07557">
    <property type="entry name" value="trimeric_dUTPase"/>
    <property type="match status" value="1"/>
</dbReference>
<dbReference type="FunFam" id="2.70.40.10:FF:000002">
    <property type="entry name" value="dUTP diphosphatase"/>
    <property type="match status" value="1"/>
</dbReference>
<dbReference type="Gene3D" id="2.70.40.10">
    <property type="match status" value="1"/>
</dbReference>
<dbReference type="HAMAP" id="MF_00116">
    <property type="entry name" value="dUTPase_bact"/>
    <property type="match status" value="1"/>
</dbReference>
<dbReference type="InterPro" id="IPR008181">
    <property type="entry name" value="dUTPase"/>
</dbReference>
<dbReference type="InterPro" id="IPR029054">
    <property type="entry name" value="dUTPase-like"/>
</dbReference>
<dbReference type="InterPro" id="IPR036157">
    <property type="entry name" value="dUTPase-like_sf"/>
</dbReference>
<dbReference type="InterPro" id="IPR033704">
    <property type="entry name" value="dUTPase_trimeric"/>
</dbReference>
<dbReference type="NCBIfam" id="TIGR00576">
    <property type="entry name" value="dut"/>
    <property type="match status" value="1"/>
</dbReference>
<dbReference type="NCBIfam" id="NF001862">
    <property type="entry name" value="PRK00601.1"/>
    <property type="match status" value="1"/>
</dbReference>
<dbReference type="PANTHER" id="PTHR11241">
    <property type="entry name" value="DEOXYURIDINE 5'-TRIPHOSPHATE NUCLEOTIDOHYDROLASE"/>
    <property type="match status" value="1"/>
</dbReference>
<dbReference type="PANTHER" id="PTHR11241:SF0">
    <property type="entry name" value="DEOXYURIDINE 5'-TRIPHOSPHATE NUCLEOTIDOHYDROLASE"/>
    <property type="match status" value="1"/>
</dbReference>
<dbReference type="Pfam" id="PF00692">
    <property type="entry name" value="dUTPase"/>
    <property type="match status" value="1"/>
</dbReference>
<dbReference type="SUPFAM" id="SSF51283">
    <property type="entry name" value="dUTPase-like"/>
    <property type="match status" value="1"/>
</dbReference>
<protein>
    <recommendedName>
        <fullName evidence="1">Deoxyuridine 5'-triphosphate nucleotidohydrolase</fullName>
        <shortName evidence="1">dUTPase</shortName>
        <ecNumber evidence="1">3.6.1.23</ecNumber>
    </recommendedName>
    <alternativeName>
        <fullName evidence="1">dUTP pyrophosphatase</fullName>
    </alternativeName>
</protein>